<organism>
    <name type="scientific">Ligilactobacillus salivarius (strain UCC118)</name>
    <name type="common">Lactobacillus salivarius</name>
    <dbReference type="NCBI Taxonomy" id="362948"/>
    <lineage>
        <taxon>Bacteria</taxon>
        <taxon>Bacillati</taxon>
        <taxon>Bacillota</taxon>
        <taxon>Bacilli</taxon>
        <taxon>Lactobacillales</taxon>
        <taxon>Lactobacillaceae</taxon>
        <taxon>Ligilactobacillus</taxon>
    </lineage>
</organism>
<accession>Q1WV68</accession>
<reference key="1">
    <citation type="journal article" date="2006" name="Proc. Natl. Acad. Sci. U.S.A.">
        <title>Multireplicon genome architecture of Lactobacillus salivarius.</title>
        <authorList>
            <person name="Claesson M.J."/>
            <person name="Li Y."/>
            <person name="Leahy S."/>
            <person name="Canchaya C."/>
            <person name="van Pijkeren J.P."/>
            <person name="Cerdeno-Tarraga A.M."/>
            <person name="Parkhill J."/>
            <person name="Flynn S."/>
            <person name="O'Sullivan G.C."/>
            <person name="Collins J.K."/>
            <person name="Higgins D."/>
            <person name="Shanahan F."/>
            <person name="Fitzgerald G.F."/>
            <person name="van Sinderen D."/>
            <person name="O'Toole P.W."/>
        </authorList>
    </citation>
    <scope>NUCLEOTIDE SEQUENCE [LARGE SCALE GENOMIC DNA]</scope>
    <source>
        <strain>UCC118</strain>
    </source>
</reference>
<sequence>MEISEKAPAKLNLSLDTPFRHQDGEPEWRMVMTAIDLSDYVHIKTIPNSKEITVQTNTGFLPCDQRNLAYQAAKLLQSKLDKPEGVEIEIDKHIPVSAGMGGGSADAAAVLRGLNKIWNLNMSREELAKLALTIDSDVPFCVYSEPALVTGRGEKITPIGPLPPMWLVIAKPQASVSTPTILRQIHEQHLNHQEVQNVVSAIKQQDFDKMCRHMGNALEPITMKKCPDIIKIKDKMLQFGADAAQMSGSGPTVFGISQKKSRATHIYNSLRGFCKEVYLVRALDSLTTK</sequence>
<comment type="function">
    <text evidence="1">Catalyzes the phosphorylation of the position 2 hydroxy group of 4-diphosphocytidyl-2C-methyl-D-erythritol.</text>
</comment>
<comment type="catalytic activity">
    <reaction evidence="1">
        <text>4-CDP-2-C-methyl-D-erythritol + ATP = 4-CDP-2-C-methyl-D-erythritol 2-phosphate + ADP + H(+)</text>
        <dbReference type="Rhea" id="RHEA:18437"/>
        <dbReference type="ChEBI" id="CHEBI:15378"/>
        <dbReference type="ChEBI" id="CHEBI:30616"/>
        <dbReference type="ChEBI" id="CHEBI:57823"/>
        <dbReference type="ChEBI" id="CHEBI:57919"/>
        <dbReference type="ChEBI" id="CHEBI:456216"/>
        <dbReference type="EC" id="2.7.1.148"/>
    </reaction>
</comment>
<comment type="pathway">
    <text evidence="1">Isoprenoid biosynthesis; isopentenyl diphosphate biosynthesis via DXP pathway; isopentenyl diphosphate from 1-deoxy-D-xylulose 5-phosphate: step 3/6.</text>
</comment>
<comment type="similarity">
    <text evidence="1">Belongs to the GHMP kinase family. IspE subfamily.</text>
</comment>
<evidence type="ECO:0000255" key="1">
    <source>
        <dbReference type="HAMAP-Rule" id="MF_00061"/>
    </source>
</evidence>
<proteinExistence type="inferred from homology"/>
<gene>
    <name evidence="1" type="primary">ispE</name>
    <name type="ordered locus">LSL_0234</name>
</gene>
<feature type="chain" id="PRO_1000007858" description="4-diphosphocytidyl-2-C-methyl-D-erythritol kinase">
    <location>
        <begin position="1"/>
        <end position="289"/>
    </location>
</feature>
<feature type="active site" evidence="1">
    <location>
        <position position="10"/>
    </location>
</feature>
<feature type="active site" evidence="1">
    <location>
        <position position="137"/>
    </location>
</feature>
<feature type="binding site" evidence="1">
    <location>
        <begin position="95"/>
        <end position="105"/>
    </location>
    <ligand>
        <name>ATP</name>
        <dbReference type="ChEBI" id="CHEBI:30616"/>
    </ligand>
</feature>
<dbReference type="EC" id="2.7.1.148" evidence="1"/>
<dbReference type="EMBL" id="CP000233">
    <property type="protein sequence ID" value="ABD99049.1"/>
    <property type="molecule type" value="Genomic_DNA"/>
</dbReference>
<dbReference type="RefSeq" id="WP_011475606.1">
    <property type="nucleotide sequence ID" value="NC_007929.1"/>
</dbReference>
<dbReference type="RefSeq" id="YP_535132.1">
    <property type="nucleotide sequence ID" value="NC_007929.1"/>
</dbReference>
<dbReference type="SMR" id="Q1WV68"/>
<dbReference type="STRING" id="362948.LSL_0234"/>
<dbReference type="KEGG" id="lsl:LSL_0234"/>
<dbReference type="PATRIC" id="fig|362948.14.peg.318"/>
<dbReference type="HOGENOM" id="CLU_053057_1_1_9"/>
<dbReference type="OrthoDB" id="9809438at2"/>
<dbReference type="UniPathway" id="UPA00056">
    <property type="reaction ID" value="UER00094"/>
</dbReference>
<dbReference type="Proteomes" id="UP000006559">
    <property type="component" value="Chromosome"/>
</dbReference>
<dbReference type="GO" id="GO:0050515">
    <property type="term" value="F:4-(cytidine 5'-diphospho)-2-C-methyl-D-erythritol kinase activity"/>
    <property type="evidence" value="ECO:0007669"/>
    <property type="project" value="UniProtKB-UniRule"/>
</dbReference>
<dbReference type="GO" id="GO:0005524">
    <property type="term" value="F:ATP binding"/>
    <property type="evidence" value="ECO:0007669"/>
    <property type="project" value="UniProtKB-UniRule"/>
</dbReference>
<dbReference type="GO" id="GO:0019288">
    <property type="term" value="P:isopentenyl diphosphate biosynthetic process, methylerythritol 4-phosphate pathway"/>
    <property type="evidence" value="ECO:0007669"/>
    <property type="project" value="UniProtKB-UniRule"/>
</dbReference>
<dbReference type="GO" id="GO:0016114">
    <property type="term" value="P:terpenoid biosynthetic process"/>
    <property type="evidence" value="ECO:0007669"/>
    <property type="project" value="InterPro"/>
</dbReference>
<dbReference type="FunFam" id="3.30.70.890:FF:000006">
    <property type="entry name" value="4-diphosphocytidyl-2-C-methyl-D-erythritol kinase"/>
    <property type="match status" value="1"/>
</dbReference>
<dbReference type="Gene3D" id="3.30.230.10">
    <property type="match status" value="1"/>
</dbReference>
<dbReference type="Gene3D" id="3.30.70.890">
    <property type="entry name" value="GHMP kinase, C-terminal domain"/>
    <property type="match status" value="1"/>
</dbReference>
<dbReference type="HAMAP" id="MF_00061">
    <property type="entry name" value="IspE"/>
    <property type="match status" value="1"/>
</dbReference>
<dbReference type="InterPro" id="IPR013750">
    <property type="entry name" value="GHMP_kinase_C_dom"/>
</dbReference>
<dbReference type="InterPro" id="IPR036554">
    <property type="entry name" value="GHMP_kinase_C_sf"/>
</dbReference>
<dbReference type="InterPro" id="IPR006204">
    <property type="entry name" value="GHMP_kinase_N_dom"/>
</dbReference>
<dbReference type="InterPro" id="IPR004424">
    <property type="entry name" value="IspE"/>
</dbReference>
<dbReference type="InterPro" id="IPR020568">
    <property type="entry name" value="Ribosomal_Su5_D2-typ_SF"/>
</dbReference>
<dbReference type="InterPro" id="IPR014721">
    <property type="entry name" value="Ribsml_uS5_D2-typ_fold_subgr"/>
</dbReference>
<dbReference type="NCBIfam" id="TIGR00154">
    <property type="entry name" value="ispE"/>
    <property type="match status" value="1"/>
</dbReference>
<dbReference type="PANTHER" id="PTHR43527">
    <property type="entry name" value="4-DIPHOSPHOCYTIDYL-2-C-METHYL-D-ERYTHRITOL KINASE, CHLOROPLASTIC"/>
    <property type="match status" value="1"/>
</dbReference>
<dbReference type="PANTHER" id="PTHR43527:SF2">
    <property type="entry name" value="4-DIPHOSPHOCYTIDYL-2-C-METHYL-D-ERYTHRITOL KINASE, CHLOROPLASTIC"/>
    <property type="match status" value="1"/>
</dbReference>
<dbReference type="Pfam" id="PF08544">
    <property type="entry name" value="GHMP_kinases_C"/>
    <property type="match status" value="1"/>
</dbReference>
<dbReference type="Pfam" id="PF00288">
    <property type="entry name" value="GHMP_kinases_N"/>
    <property type="match status" value="1"/>
</dbReference>
<dbReference type="PIRSF" id="PIRSF010376">
    <property type="entry name" value="IspE"/>
    <property type="match status" value="1"/>
</dbReference>
<dbReference type="SUPFAM" id="SSF55060">
    <property type="entry name" value="GHMP Kinase, C-terminal domain"/>
    <property type="match status" value="1"/>
</dbReference>
<dbReference type="SUPFAM" id="SSF54211">
    <property type="entry name" value="Ribosomal protein S5 domain 2-like"/>
    <property type="match status" value="1"/>
</dbReference>
<protein>
    <recommendedName>
        <fullName evidence="1">4-diphosphocytidyl-2-C-methyl-D-erythritol kinase</fullName>
        <shortName evidence="1">CMK</shortName>
        <ecNumber evidence="1">2.7.1.148</ecNumber>
    </recommendedName>
    <alternativeName>
        <fullName evidence="1">4-(cytidine-5'-diphospho)-2-C-methyl-D-erythritol kinase</fullName>
    </alternativeName>
</protein>
<name>ISPE_LIGS1</name>
<keyword id="KW-0067">ATP-binding</keyword>
<keyword id="KW-0414">Isoprene biosynthesis</keyword>
<keyword id="KW-0418">Kinase</keyword>
<keyword id="KW-0547">Nucleotide-binding</keyword>
<keyword id="KW-1185">Reference proteome</keyword>
<keyword id="KW-0808">Transferase</keyword>